<keyword id="KW-0028">Amino-acid biosynthesis</keyword>
<keyword id="KW-0378">Hydrolase</keyword>
<keyword id="KW-0486">Methionine biosynthesis</keyword>
<sequence length="236" mass="24858">MKIGIIGAMEPEVAHLIAAMTNASSQTIAGIEFIAGTLAGKDVVVTRSGIGKVAASIATTLLIEKYAPDAVINTGSAGGFVDSLSIGDIVISSEVRHHDVDVTAFGYEIGQMAQQPAAFIPAPYLVEAANKAIKQLGEVKAIEGLICTGDSFICDPVRTKTMLEHFPTMAACEMEGAAIAQVCHQFGMPFVVIRSLSDNANNDSPVDFDSYIVKAGYHSALMVMLLLEQLDPNSVK</sequence>
<comment type="function">
    <text evidence="1">Catalyzes the irreversible cleavage of the glycosidic bond in both 5'-methylthioadenosine (MTA) and S-adenosylhomocysteine (SAH/AdoHcy) to adenine and the corresponding thioribose, 5'-methylthioribose and S-ribosylhomocysteine, respectively. Also cleaves 5'-deoxyadenosine, a toxic by-product of radical S-adenosylmethionine (SAM) enzymes, into 5-deoxyribose and adenine.</text>
</comment>
<comment type="catalytic activity">
    <reaction evidence="1">
        <text>S-adenosyl-L-homocysteine + H2O = S-(5-deoxy-D-ribos-5-yl)-L-homocysteine + adenine</text>
        <dbReference type="Rhea" id="RHEA:17805"/>
        <dbReference type="ChEBI" id="CHEBI:15377"/>
        <dbReference type="ChEBI" id="CHEBI:16708"/>
        <dbReference type="ChEBI" id="CHEBI:57856"/>
        <dbReference type="ChEBI" id="CHEBI:58195"/>
        <dbReference type="EC" id="3.2.2.9"/>
    </reaction>
</comment>
<comment type="catalytic activity">
    <reaction evidence="1">
        <text>S-methyl-5'-thioadenosine + H2O = 5-(methylsulfanyl)-D-ribose + adenine</text>
        <dbReference type="Rhea" id="RHEA:13617"/>
        <dbReference type="ChEBI" id="CHEBI:15377"/>
        <dbReference type="ChEBI" id="CHEBI:16708"/>
        <dbReference type="ChEBI" id="CHEBI:17509"/>
        <dbReference type="ChEBI" id="CHEBI:78440"/>
        <dbReference type="EC" id="3.2.2.9"/>
    </reaction>
</comment>
<comment type="catalytic activity">
    <reaction evidence="1">
        <text>5'-deoxyadenosine + H2O = 5-deoxy-D-ribose + adenine</text>
        <dbReference type="Rhea" id="RHEA:29859"/>
        <dbReference type="ChEBI" id="CHEBI:15377"/>
        <dbReference type="ChEBI" id="CHEBI:16708"/>
        <dbReference type="ChEBI" id="CHEBI:17319"/>
        <dbReference type="ChEBI" id="CHEBI:149540"/>
        <dbReference type="EC" id="3.2.2.9"/>
    </reaction>
    <physiologicalReaction direction="left-to-right" evidence="1">
        <dbReference type="Rhea" id="RHEA:29860"/>
    </physiologicalReaction>
</comment>
<comment type="pathway">
    <text evidence="1">Amino-acid biosynthesis; L-methionine biosynthesis via salvage pathway; S-methyl-5-thio-alpha-D-ribose 1-phosphate from S-methyl-5'-thioadenosine (hydrolase route): step 1/2.</text>
</comment>
<comment type="similarity">
    <text evidence="1">Belongs to the PNP/UDP phosphorylase family. MtnN subfamily.</text>
</comment>
<evidence type="ECO:0000255" key="1">
    <source>
        <dbReference type="HAMAP-Rule" id="MF_01684"/>
    </source>
</evidence>
<organism>
    <name type="scientific">Shewanella sp. (strain MR-7)</name>
    <dbReference type="NCBI Taxonomy" id="60481"/>
    <lineage>
        <taxon>Bacteria</taxon>
        <taxon>Pseudomonadati</taxon>
        <taxon>Pseudomonadota</taxon>
        <taxon>Gammaproteobacteria</taxon>
        <taxon>Alteromonadales</taxon>
        <taxon>Shewanellaceae</taxon>
        <taxon>Shewanella</taxon>
    </lineage>
</organism>
<protein>
    <recommendedName>
        <fullName evidence="1">5'-methylthioadenosine/S-adenosylhomocysteine nucleosidase</fullName>
        <shortName evidence="1">MTA/SAH nucleosidase</shortName>
        <shortName evidence="1">MTAN</shortName>
        <ecNumber evidence="1">3.2.2.9</ecNumber>
    </recommendedName>
    <alternativeName>
        <fullName evidence="1">5'-deoxyadenosine nucleosidase</fullName>
        <shortName evidence="1">DOA nucleosidase</shortName>
        <shortName evidence="1">dAdo nucleosidase</shortName>
    </alternativeName>
    <alternativeName>
        <fullName evidence="1">5'-methylthioadenosine nucleosidase</fullName>
        <shortName evidence="1">MTA nucleosidase</shortName>
    </alternativeName>
    <alternativeName>
        <fullName evidence="1">S-adenosylhomocysteine nucleosidase</fullName>
        <shortName evidence="1">AdoHcy nucleosidase</shortName>
        <shortName evidence="1">SAH nucleosidase</shortName>
        <shortName evidence="1">SRH nucleosidase</shortName>
    </alternativeName>
</protein>
<accession>Q0HSG5</accession>
<dbReference type="EC" id="3.2.2.9" evidence="1"/>
<dbReference type="EMBL" id="CP000444">
    <property type="protein sequence ID" value="ABI43940.1"/>
    <property type="molecule type" value="Genomic_DNA"/>
</dbReference>
<dbReference type="SMR" id="Q0HSG5"/>
<dbReference type="KEGG" id="shm:Shewmr7_2956"/>
<dbReference type="HOGENOM" id="CLU_031248_2_2_6"/>
<dbReference type="UniPathway" id="UPA00904">
    <property type="reaction ID" value="UER00871"/>
</dbReference>
<dbReference type="GO" id="GO:0005829">
    <property type="term" value="C:cytosol"/>
    <property type="evidence" value="ECO:0007669"/>
    <property type="project" value="TreeGrafter"/>
</dbReference>
<dbReference type="GO" id="GO:0008782">
    <property type="term" value="F:adenosylhomocysteine nucleosidase activity"/>
    <property type="evidence" value="ECO:0007669"/>
    <property type="project" value="UniProtKB-UniRule"/>
</dbReference>
<dbReference type="GO" id="GO:0008930">
    <property type="term" value="F:methylthioadenosine nucleosidase activity"/>
    <property type="evidence" value="ECO:0007669"/>
    <property type="project" value="UniProtKB-UniRule"/>
</dbReference>
<dbReference type="GO" id="GO:0019509">
    <property type="term" value="P:L-methionine salvage from methylthioadenosine"/>
    <property type="evidence" value="ECO:0007669"/>
    <property type="project" value="UniProtKB-UniRule"/>
</dbReference>
<dbReference type="GO" id="GO:0019284">
    <property type="term" value="P:L-methionine salvage from S-adenosylmethionine"/>
    <property type="evidence" value="ECO:0007669"/>
    <property type="project" value="TreeGrafter"/>
</dbReference>
<dbReference type="GO" id="GO:0009164">
    <property type="term" value="P:nucleoside catabolic process"/>
    <property type="evidence" value="ECO:0007669"/>
    <property type="project" value="InterPro"/>
</dbReference>
<dbReference type="CDD" id="cd09008">
    <property type="entry name" value="MTAN"/>
    <property type="match status" value="1"/>
</dbReference>
<dbReference type="FunFam" id="3.40.50.1580:FF:000001">
    <property type="entry name" value="MTA/SAH nucleosidase family protein"/>
    <property type="match status" value="1"/>
</dbReference>
<dbReference type="Gene3D" id="3.40.50.1580">
    <property type="entry name" value="Nucleoside phosphorylase domain"/>
    <property type="match status" value="1"/>
</dbReference>
<dbReference type="HAMAP" id="MF_01684">
    <property type="entry name" value="Salvage_MtnN"/>
    <property type="match status" value="1"/>
</dbReference>
<dbReference type="InterPro" id="IPR010049">
    <property type="entry name" value="MTA_SAH_Nsdase"/>
</dbReference>
<dbReference type="InterPro" id="IPR000845">
    <property type="entry name" value="Nucleoside_phosphorylase_d"/>
</dbReference>
<dbReference type="InterPro" id="IPR035994">
    <property type="entry name" value="Nucleoside_phosphorylase_sf"/>
</dbReference>
<dbReference type="NCBIfam" id="TIGR01704">
    <property type="entry name" value="MTA_SAH-Nsdase"/>
    <property type="match status" value="1"/>
</dbReference>
<dbReference type="NCBIfam" id="NF004079">
    <property type="entry name" value="PRK05584.1"/>
    <property type="match status" value="1"/>
</dbReference>
<dbReference type="PANTHER" id="PTHR46832">
    <property type="entry name" value="5'-METHYLTHIOADENOSINE/S-ADENOSYLHOMOCYSTEINE NUCLEOSIDASE"/>
    <property type="match status" value="1"/>
</dbReference>
<dbReference type="PANTHER" id="PTHR46832:SF1">
    <property type="entry name" value="5'-METHYLTHIOADENOSINE_S-ADENOSYLHOMOCYSTEINE NUCLEOSIDASE"/>
    <property type="match status" value="1"/>
</dbReference>
<dbReference type="Pfam" id="PF01048">
    <property type="entry name" value="PNP_UDP_1"/>
    <property type="match status" value="1"/>
</dbReference>
<dbReference type="SUPFAM" id="SSF53167">
    <property type="entry name" value="Purine and uridine phosphorylases"/>
    <property type="match status" value="1"/>
</dbReference>
<gene>
    <name evidence="1" type="primary">mtnN</name>
    <name type="ordered locus">Shewmr7_2956</name>
</gene>
<proteinExistence type="inferred from homology"/>
<feature type="chain" id="PRO_0000359353" description="5'-methylthioadenosine/S-adenosylhomocysteine nucleosidase">
    <location>
        <begin position="1"/>
        <end position="236"/>
    </location>
</feature>
<feature type="active site" description="Proton acceptor" evidence="1">
    <location>
        <position position="12"/>
    </location>
</feature>
<feature type="active site" description="Proton donor" evidence="1">
    <location>
        <position position="198"/>
    </location>
</feature>
<feature type="binding site" evidence="1">
    <location>
        <position position="78"/>
    </location>
    <ligand>
        <name>substrate</name>
    </ligand>
</feature>
<feature type="binding site" evidence="1">
    <location>
        <position position="153"/>
    </location>
    <ligand>
        <name>substrate</name>
    </ligand>
</feature>
<feature type="binding site" evidence="1">
    <location>
        <begin position="174"/>
        <end position="175"/>
    </location>
    <ligand>
        <name>substrate</name>
    </ligand>
</feature>
<reference key="1">
    <citation type="submission" date="2006-08" db="EMBL/GenBank/DDBJ databases">
        <title>Complete sequence of chromosome 1 of Shewanella sp. MR-7.</title>
        <authorList>
            <person name="Copeland A."/>
            <person name="Lucas S."/>
            <person name="Lapidus A."/>
            <person name="Barry K."/>
            <person name="Detter J.C."/>
            <person name="Glavina del Rio T."/>
            <person name="Hammon N."/>
            <person name="Israni S."/>
            <person name="Dalin E."/>
            <person name="Tice H."/>
            <person name="Pitluck S."/>
            <person name="Kiss H."/>
            <person name="Brettin T."/>
            <person name="Bruce D."/>
            <person name="Han C."/>
            <person name="Tapia R."/>
            <person name="Gilna P."/>
            <person name="Schmutz J."/>
            <person name="Larimer F."/>
            <person name="Land M."/>
            <person name="Hauser L."/>
            <person name="Kyrpides N."/>
            <person name="Mikhailova N."/>
            <person name="Nealson K."/>
            <person name="Konstantinidis K."/>
            <person name="Klappenbach J."/>
            <person name="Tiedje J."/>
            <person name="Richardson P."/>
        </authorList>
    </citation>
    <scope>NUCLEOTIDE SEQUENCE [LARGE SCALE GENOMIC DNA]</scope>
    <source>
        <strain>MR-7</strain>
    </source>
</reference>
<name>MTNN_SHESR</name>